<evidence type="ECO:0000255" key="1">
    <source>
        <dbReference type="HAMAP-Rule" id="MF_01269"/>
    </source>
</evidence>
<keyword id="KW-0028">Amino-acid biosynthesis</keyword>
<keyword id="KW-0057">Aromatic amino acid biosynthesis</keyword>
<keyword id="KW-0067">ATP-binding</keyword>
<keyword id="KW-0963">Cytoplasm</keyword>
<keyword id="KW-0418">Kinase</keyword>
<keyword id="KW-0460">Magnesium</keyword>
<keyword id="KW-0479">Metal-binding</keyword>
<keyword id="KW-0547">Nucleotide-binding</keyword>
<keyword id="KW-1185">Reference proteome</keyword>
<keyword id="KW-0808">Transferase</keyword>
<proteinExistence type="inferred from homology"/>
<feature type="chain" id="PRO_1000165144" description="Shikimate kinase 2">
    <location>
        <begin position="1"/>
        <end position="174"/>
    </location>
</feature>
<feature type="region of interest" description="LID domain">
    <location>
        <begin position="112"/>
        <end position="126"/>
    </location>
</feature>
<feature type="binding site" evidence="1">
    <location>
        <begin position="12"/>
        <end position="17"/>
    </location>
    <ligand>
        <name>ATP</name>
        <dbReference type="ChEBI" id="CHEBI:30616"/>
    </ligand>
</feature>
<feature type="binding site" evidence="1">
    <location>
        <position position="16"/>
    </location>
    <ligand>
        <name>Mg(2+)</name>
        <dbReference type="ChEBI" id="CHEBI:18420"/>
    </ligand>
</feature>
<feature type="binding site" evidence="1">
    <location>
        <position position="32"/>
    </location>
    <ligand>
        <name>Mg(2+)</name>
        <dbReference type="ChEBI" id="CHEBI:18420"/>
    </ligand>
</feature>
<feature type="binding site" evidence="1">
    <location>
        <position position="34"/>
    </location>
    <ligand>
        <name>substrate</name>
    </ligand>
</feature>
<feature type="binding site" evidence="1">
    <location>
        <position position="58"/>
    </location>
    <ligand>
        <name>substrate</name>
    </ligand>
</feature>
<feature type="binding site" evidence="1">
    <location>
        <position position="79"/>
    </location>
    <ligand>
        <name>substrate</name>
    </ligand>
</feature>
<feature type="binding site" evidence="1">
    <location>
        <position position="120"/>
    </location>
    <ligand>
        <name>ATP</name>
        <dbReference type="ChEBI" id="CHEBI:30616"/>
    </ligand>
</feature>
<feature type="binding site" evidence="1">
    <location>
        <position position="139"/>
    </location>
    <ligand>
        <name>substrate</name>
    </ligand>
</feature>
<protein>
    <recommendedName>
        <fullName evidence="1">Shikimate kinase 2</fullName>
        <shortName evidence="1">SK 2</shortName>
        <ecNumber evidence="1">2.7.1.71</ecNumber>
    </recommendedName>
</protein>
<gene>
    <name evidence="1" type="primary">aroL</name>
    <name type="ordered locus">E2348C_0324</name>
</gene>
<organism>
    <name type="scientific">Escherichia coli O127:H6 (strain E2348/69 / EPEC)</name>
    <dbReference type="NCBI Taxonomy" id="574521"/>
    <lineage>
        <taxon>Bacteria</taxon>
        <taxon>Pseudomonadati</taxon>
        <taxon>Pseudomonadota</taxon>
        <taxon>Gammaproteobacteria</taxon>
        <taxon>Enterobacterales</taxon>
        <taxon>Enterobacteriaceae</taxon>
        <taxon>Escherichia</taxon>
    </lineage>
</organism>
<dbReference type="EC" id="2.7.1.71" evidence="1"/>
<dbReference type="EMBL" id="FM180568">
    <property type="protein sequence ID" value="CAS07872.1"/>
    <property type="molecule type" value="Genomic_DNA"/>
</dbReference>
<dbReference type="RefSeq" id="WP_000193393.1">
    <property type="nucleotide sequence ID" value="NC_011601.1"/>
</dbReference>
<dbReference type="SMR" id="B7UJL2"/>
<dbReference type="GeneID" id="93777073"/>
<dbReference type="KEGG" id="ecg:E2348C_0324"/>
<dbReference type="HOGENOM" id="CLU_057607_4_3_6"/>
<dbReference type="UniPathway" id="UPA00053">
    <property type="reaction ID" value="UER00088"/>
</dbReference>
<dbReference type="Proteomes" id="UP000008205">
    <property type="component" value="Chromosome"/>
</dbReference>
<dbReference type="GO" id="GO:0005829">
    <property type="term" value="C:cytosol"/>
    <property type="evidence" value="ECO:0007669"/>
    <property type="project" value="TreeGrafter"/>
</dbReference>
<dbReference type="GO" id="GO:0005524">
    <property type="term" value="F:ATP binding"/>
    <property type="evidence" value="ECO:0007669"/>
    <property type="project" value="UniProtKB-UniRule"/>
</dbReference>
<dbReference type="GO" id="GO:0000287">
    <property type="term" value="F:magnesium ion binding"/>
    <property type="evidence" value="ECO:0007669"/>
    <property type="project" value="UniProtKB-UniRule"/>
</dbReference>
<dbReference type="GO" id="GO:0004765">
    <property type="term" value="F:shikimate kinase activity"/>
    <property type="evidence" value="ECO:0007669"/>
    <property type="project" value="UniProtKB-UniRule"/>
</dbReference>
<dbReference type="GO" id="GO:0008652">
    <property type="term" value="P:amino acid biosynthetic process"/>
    <property type="evidence" value="ECO:0007669"/>
    <property type="project" value="UniProtKB-KW"/>
</dbReference>
<dbReference type="GO" id="GO:0009073">
    <property type="term" value="P:aromatic amino acid family biosynthetic process"/>
    <property type="evidence" value="ECO:0007669"/>
    <property type="project" value="UniProtKB-KW"/>
</dbReference>
<dbReference type="GO" id="GO:0009423">
    <property type="term" value="P:chorismate biosynthetic process"/>
    <property type="evidence" value="ECO:0007669"/>
    <property type="project" value="UniProtKB-UniRule"/>
</dbReference>
<dbReference type="CDD" id="cd00464">
    <property type="entry name" value="SK"/>
    <property type="match status" value="1"/>
</dbReference>
<dbReference type="FunFam" id="3.40.50.300:FF:000408">
    <property type="entry name" value="Shikimate kinase 2"/>
    <property type="match status" value="1"/>
</dbReference>
<dbReference type="Gene3D" id="3.40.50.300">
    <property type="entry name" value="P-loop containing nucleotide triphosphate hydrolases"/>
    <property type="match status" value="1"/>
</dbReference>
<dbReference type="HAMAP" id="MF_00109">
    <property type="entry name" value="Shikimate_kinase"/>
    <property type="match status" value="1"/>
</dbReference>
<dbReference type="HAMAP" id="MF_01269">
    <property type="entry name" value="Shikimate_kinase_2"/>
    <property type="match status" value="1"/>
</dbReference>
<dbReference type="InterPro" id="IPR027417">
    <property type="entry name" value="P-loop_NTPase"/>
</dbReference>
<dbReference type="InterPro" id="IPR031322">
    <property type="entry name" value="Shikimate/glucono_kinase"/>
</dbReference>
<dbReference type="InterPro" id="IPR000623">
    <property type="entry name" value="Shikimate_kinase/TSH1"/>
</dbReference>
<dbReference type="InterPro" id="IPR027544">
    <property type="entry name" value="Shikimate_kinase_2"/>
</dbReference>
<dbReference type="InterPro" id="IPR023000">
    <property type="entry name" value="Shikimate_kinase_CS"/>
</dbReference>
<dbReference type="NCBIfam" id="NF002988">
    <property type="entry name" value="PRK03731.1"/>
    <property type="match status" value="1"/>
</dbReference>
<dbReference type="PANTHER" id="PTHR21087">
    <property type="entry name" value="SHIKIMATE KINASE"/>
    <property type="match status" value="1"/>
</dbReference>
<dbReference type="PANTHER" id="PTHR21087:SF21">
    <property type="entry name" value="SHIKIMATE KINASE 2"/>
    <property type="match status" value="1"/>
</dbReference>
<dbReference type="Pfam" id="PF01202">
    <property type="entry name" value="SKI"/>
    <property type="match status" value="1"/>
</dbReference>
<dbReference type="PRINTS" id="PR01100">
    <property type="entry name" value="SHIKIMTKNASE"/>
</dbReference>
<dbReference type="SUPFAM" id="SSF52540">
    <property type="entry name" value="P-loop containing nucleoside triphosphate hydrolases"/>
    <property type="match status" value="1"/>
</dbReference>
<dbReference type="PROSITE" id="PS01128">
    <property type="entry name" value="SHIKIMATE_KINASE"/>
    <property type="match status" value="1"/>
</dbReference>
<name>AROL_ECO27</name>
<sequence length="174" mass="19151">MTQPLFLIGPRGCGKTTVGMALADSLNRRFVDTDQWLQSQLNMTVAEIVEREEWAGFRARETAALEAVTAPSTVIATGGGIILTEFNRHFMQNNGIVVYLCAPVSVLVNRLQAAPEEDLRPTLTGKPLSEEVQEVLEERDALYREVAHIIIDATNEPSQVISEIRSALAQTINC</sequence>
<accession>B7UJL2</accession>
<comment type="function">
    <text evidence="1">Catalyzes the specific phosphorylation of the 3-hydroxyl group of shikimic acid using ATP as a cosubstrate.</text>
</comment>
<comment type="catalytic activity">
    <reaction evidence="1">
        <text>shikimate + ATP = 3-phosphoshikimate + ADP + H(+)</text>
        <dbReference type="Rhea" id="RHEA:13121"/>
        <dbReference type="ChEBI" id="CHEBI:15378"/>
        <dbReference type="ChEBI" id="CHEBI:30616"/>
        <dbReference type="ChEBI" id="CHEBI:36208"/>
        <dbReference type="ChEBI" id="CHEBI:145989"/>
        <dbReference type="ChEBI" id="CHEBI:456216"/>
        <dbReference type="EC" id="2.7.1.71"/>
    </reaction>
</comment>
<comment type="cofactor">
    <cofactor evidence="1">
        <name>Mg(2+)</name>
        <dbReference type="ChEBI" id="CHEBI:18420"/>
    </cofactor>
    <text evidence="1">Binds 1 Mg(2+) ion per subunit.</text>
</comment>
<comment type="pathway">
    <text evidence="1">Metabolic intermediate biosynthesis; chorismate biosynthesis; chorismate from D-erythrose 4-phosphate and phosphoenolpyruvate: step 5/7.</text>
</comment>
<comment type="subunit">
    <text evidence="1">Monomer.</text>
</comment>
<comment type="subcellular location">
    <subcellularLocation>
        <location evidence="1">Cytoplasm</location>
    </subcellularLocation>
</comment>
<comment type="domain">
    <text evidence="1">The LID domain closes over the active site upon ATP binding.</text>
</comment>
<comment type="similarity">
    <text evidence="1">Belongs to the shikimate kinase family. AroL subfamily.</text>
</comment>
<reference key="1">
    <citation type="journal article" date="2009" name="J. Bacteriol.">
        <title>Complete genome sequence and comparative genome analysis of enteropathogenic Escherichia coli O127:H6 strain E2348/69.</title>
        <authorList>
            <person name="Iguchi A."/>
            <person name="Thomson N.R."/>
            <person name="Ogura Y."/>
            <person name="Saunders D."/>
            <person name="Ooka T."/>
            <person name="Henderson I.R."/>
            <person name="Harris D."/>
            <person name="Asadulghani M."/>
            <person name="Kurokawa K."/>
            <person name="Dean P."/>
            <person name="Kenny B."/>
            <person name="Quail M.A."/>
            <person name="Thurston S."/>
            <person name="Dougan G."/>
            <person name="Hayashi T."/>
            <person name="Parkhill J."/>
            <person name="Frankel G."/>
        </authorList>
    </citation>
    <scope>NUCLEOTIDE SEQUENCE [LARGE SCALE GENOMIC DNA]</scope>
    <source>
        <strain>E2348/69 / EPEC</strain>
    </source>
</reference>